<dbReference type="EC" id="3.2.1.17"/>
<dbReference type="PIR" id="JC5555">
    <property type="entry name" value="JC5555"/>
</dbReference>
<dbReference type="BMRB" id="Q7LZQ0"/>
<dbReference type="SMR" id="Q7LZQ0"/>
<dbReference type="CAZy" id="GH22">
    <property type="family name" value="Glycoside Hydrolase Family 22"/>
</dbReference>
<dbReference type="GO" id="GO:0005576">
    <property type="term" value="C:extracellular region"/>
    <property type="evidence" value="ECO:0007669"/>
    <property type="project" value="UniProtKB-SubCell"/>
</dbReference>
<dbReference type="GO" id="GO:0003796">
    <property type="term" value="F:lysozyme activity"/>
    <property type="evidence" value="ECO:0007669"/>
    <property type="project" value="UniProtKB-EC"/>
</dbReference>
<dbReference type="GO" id="GO:0050829">
    <property type="term" value="P:defense response to Gram-negative bacterium"/>
    <property type="evidence" value="ECO:0007669"/>
    <property type="project" value="TreeGrafter"/>
</dbReference>
<dbReference type="GO" id="GO:0050830">
    <property type="term" value="P:defense response to Gram-positive bacterium"/>
    <property type="evidence" value="ECO:0007669"/>
    <property type="project" value="TreeGrafter"/>
</dbReference>
<dbReference type="GO" id="GO:0031640">
    <property type="term" value="P:killing of cells of another organism"/>
    <property type="evidence" value="ECO:0007669"/>
    <property type="project" value="UniProtKB-KW"/>
</dbReference>
<dbReference type="CDD" id="cd16897">
    <property type="entry name" value="LYZ_C"/>
    <property type="match status" value="1"/>
</dbReference>
<dbReference type="FunFam" id="1.10.530.10:FF:000001">
    <property type="entry name" value="Lysozyme C"/>
    <property type="match status" value="1"/>
</dbReference>
<dbReference type="Gene3D" id="1.10.530.10">
    <property type="match status" value="1"/>
</dbReference>
<dbReference type="InterPro" id="IPR001916">
    <property type="entry name" value="Glyco_hydro_22"/>
</dbReference>
<dbReference type="InterPro" id="IPR019799">
    <property type="entry name" value="Glyco_hydro_22_CS"/>
</dbReference>
<dbReference type="InterPro" id="IPR000974">
    <property type="entry name" value="Glyco_hydro_22_lys"/>
</dbReference>
<dbReference type="InterPro" id="IPR023346">
    <property type="entry name" value="Lysozyme-like_dom_sf"/>
</dbReference>
<dbReference type="PANTHER" id="PTHR11407">
    <property type="entry name" value="LYSOZYME C"/>
    <property type="match status" value="1"/>
</dbReference>
<dbReference type="PANTHER" id="PTHR11407:SF28">
    <property type="entry name" value="LYSOZYME C"/>
    <property type="match status" value="1"/>
</dbReference>
<dbReference type="Pfam" id="PF00062">
    <property type="entry name" value="Lys"/>
    <property type="match status" value="1"/>
</dbReference>
<dbReference type="PRINTS" id="PR00137">
    <property type="entry name" value="LYSOZYME"/>
</dbReference>
<dbReference type="PRINTS" id="PR00135">
    <property type="entry name" value="LYZLACT"/>
</dbReference>
<dbReference type="SMART" id="SM00263">
    <property type="entry name" value="LYZ1"/>
    <property type="match status" value="1"/>
</dbReference>
<dbReference type="SUPFAM" id="SSF53955">
    <property type="entry name" value="Lysozyme-like"/>
    <property type="match status" value="1"/>
</dbReference>
<dbReference type="PROSITE" id="PS00128">
    <property type="entry name" value="GLYCOSYL_HYDROL_F22_1"/>
    <property type="match status" value="1"/>
</dbReference>
<dbReference type="PROSITE" id="PS51348">
    <property type="entry name" value="GLYCOSYL_HYDROL_F22_2"/>
    <property type="match status" value="1"/>
</dbReference>
<gene>
    <name type="primary">LYZ</name>
</gene>
<sequence length="129" mass="14323">KVYGRCELAAAMKRLGLDNYRGYSLGNWVCAAKFESNFNTHATNRNTDGSTDYGILQINSRWWCNDGRTPGSRNLCNIPCSALLSSDITASVNCAKKIVSDGNGMNAWVAWRNRCKGTDVHAWIRGCRL</sequence>
<feature type="chain" id="PRO_0000208860" description="Lysozyme C">
    <location>
        <begin position="1"/>
        <end position="129"/>
    </location>
</feature>
<feature type="domain" description="C-type lysozyme" evidence="2">
    <location>
        <begin position="1"/>
        <end position="129"/>
    </location>
</feature>
<feature type="active site" evidence="2">
    <location>
        <position position="35"/>
    </location>
</feature>
<feature type="active site" evidence="2">
    <location>
        <position position="52"/>
    </location>
</feature>
<feature type="disulfide bond" evidence="2">
    <location>
        <begin position="6"/>
        <end position="127"/>
    </location>
</feature>
<feature type="disulfide bond" evidence="2">
    <location>
        <begin position="30"/>
        <end position="115"/>
    </location>
</feature>
<feature type="disulfide bond" evidence="2">
    <location>
        <begin position="64"/>
        <end position="80"/>
    </location>
</feature>
<feature type="disulfide bond" evidence="2">
    <location>
        <begin position="76"/>
        <end position="94"/>
    </location>
</feature>
<proteinExistence type="evidence at protein level"/>
<organism>
    <name type="scientific">Catreus wallichii</name>
    <name type="common">Cheer pheasant</name>
    <name type="synonym">Lophophorus wallichii</name>
    <dbReference type="NCBI Taxonomy" id="9085"/>
    <lineage>
        <taxon>Eukaryota</taxon>
        <taxon>Metazoa</taxon>
        <taxon>Chordata</taxon>
        <taxon>Craniata</taxon>
        <taxon>Vertebrata</taxon>
        <taxon>Euteleostomi</taxon>
        <taxon>Archelosauria</taxon>
        <taxon>Archosauria</taxon>
        <taxon>Dinosauria</taxon>
        <taxon>Saurischia</taxon>
        <taxon>Theropoda</taxon>
        <taxon>Coelurosauria</taxon>
        <taxon>Aves</taxon>
        <taxon>Neognathae</taxon>
        <taxon>Galloanserae</taxon>
        <taxon>Galliformes</taxon>
        <taxon>Phasianidae</taxon>
        <taxon>Phasianinae</taxon>
        <taxon>Catreus</taxon>
    </lineage>
</organism>
<accession>Q7LZQ0</accession>
<reference key="1">
    <citation type="submission" date="1997-08" db="PIR data bank">
        <authorList>
            <person name="Araki T."/>
            <person name="Seki S."/>
            <person name="Torikata T."/>
        </authorList>
    </citation>
    <scope>PROTEIN SEQUENCE</scope>
</reference>
<comment type="function">
    <text evidence="2">Lysozymes have primarily a bacteriolytic function; those in tissues and body fluids are associated with the monocyte-macrophage system and enhance the activity of immunoagents.</text>
</comment>
<comment type="catalytic activity">
    <reaction>
        <text>Hydrolysis of (1-&gt;4)-beta-linkages between N-acetylmuramic acid and N-acetyl-D-glucosamine residues in a peptidoglycan and between N-acetyl-D-glucosamine residues in chitodextrins.</text>
        <dbReference type="EC" id="3.2.1.17"/>
    </reaction>
</comment>
<comment type="subunit">
    <text evidence="1">Monomer.</text>
</comment>
<comment type="subcellular location">
    <subcellularLocation>
        <location>Secreted</location>
    </subcellularLocation>
</comment>
<comment type="miscellaneous">
    <text>Lysozyme C is capable of both hydrolysis and transglycosylation; it also shows a slight esterase activity. It acts rapidly on both peptide-substituted and unsubstituted peptidoglycan, and slowly on chitin oligosaccharides.</text>
</comment>
<comment type="similarity">
    <text evidence="2">Belongs to the glycosyl hydrolase 22 family.</text>
</comment>
<evidence type="ECO:0000250" key="1"/>
<evidence type="ECO:0000255" key="2">
    <source>
        <dbReference type="PROSITE-ProRule" id="PRU00680"/>
    </source>
</evidence>
<keyword id="KW-0929">Antimicrobial</keyword>
<keyword id="KW-0081">Bacteriolytic enzyme</keyword>
<keyword id="KW-0903">Direct protein sequencing</keyword>
<keyword id="KW-1015">Disulfide bond</keyword>
<keyword id="KW-0326">Glycosidase</keyword>
<keyword id="KW-0378">Hydrolase</keyword>
<keyword id="KW-0964">Secreted</keyword>
<name>LYSC_CATWA</name>
<protein>
    <recommendedName>
        <fullName>Lysozyme C</fullName>
        <ecNumber>3.2.1.17</ecNumber>
    </recommendedName>
    <alternativeName>
        <fullName>1,4-beta-N-acetylmuramidase C</fullName>
    </alternativeName>
</protein>